<name>ASSY_ECO57</name>
<accession>Q8X9M0</accession>
<keyword id="KW-0028">Amino-acid biosynthesis</keyword>
<keyword id="KW-0055">Arginine biosynthesis</keyword>
<keyword id="KW-0067">ATP-binding</keyword>
<keyword id="KW-0963">Cytoplasm</keyword>
<keyword id="KW-0436">Ligase</keyword>
<keyword id="KW-0547">Nucleotide-binding</keyword>
<keyword id="KW-1185">Reference proteome</keyword>
<gene>
    <name type="primary">argG</name>
    <name type="ordered locus">Z4534</name>
    <name type="ordered locus">ECs4052</name>
</gene>
<protein>
    <recommendedName>
        <fullName>Argininosuccinate synthase</fullName>
        <ecNumber>6.3.4.5</ecNumber>
    </recommendedName>
    <alternativeName>
        <fullName>Citrulline--aspartate ligase</fullName>
    </alternativeName>
</protein>
<reference key="1">
    <citation type="journal article" date="2001" name="Nature">
        <title>Genome sequence of enterohaemorrhagic Escherichia coli O157:H7.</title>
        <authorList>
            <person name="Perna N.T."/>
            <person name="Plunkett G. III"/>
            <person name="Burland V."/>
            <person name="Mau B."/>
            <person name="Glasner J.D."/>
            <person name="Rose D.J."/>
            <person name="Mayhew G.F."/>
            <person name="Evans P.S."/>
            <person name="Gregor J."/>
            <person name="Kirkpatrick H.A."/>
            <person name="Posfai G."/>
            <person name="Hackett J."/>
            <person name="Klink S."/>
            <person name="Boutin A."/>
            <person name="Shao Y."/>
            <person name="Miller L."/>
            <person name="Grotbeck E.J."/>
            <person name="Davis N.W."/>
            <person name="Lim A."/>
            <person name="Dimalanta E.T."/>
            <person name="Potamousis K."/>
            <person name="Apodaca J."/>
            <person name="Anantharaman T.S."/>
            <person name="Lin J."/>
            <person name="Yen G."/>
            <person name="Schwartz D.C."/>
            <person name="Welch R.A."/>
            <person name="Blattner F.R."/>
        </authorList>
    </citation>
    <scope>NUCLEOTIDE SEQUENCE [LARGE SCALE GENOMIC DNA]</scope>
    <source>
        <strain>O157:H7 / EDL933 / ATCC 700927 / EHEC</strain>
    </source>
</reference>
<reference key="2">
    <citation type="journal article" date="2001" name="DNA Res.">
        <title>Complete genome sequence of enterohemorrhagic Escherichia coli O157:H7 and genomic comparison with a laboratory strain K-12.</title>
        <authorList>
            <person name="Hayashi T."/>
            <person name="Makino K."/>
            <person name="Ohnishi M."/>
            <person name="Kurokawa K."/>
            <person name="Ishii K."/>
            <person name="Yokoyama K."/>
            <person name="Han C.-G."/>
            <person name="Ohtsubo E."/>
            <person name="Nakayama K."/>
            <person name="Murata T."/>
            <person name="Tanaka M."/>
            <person name="Tobe T."/>
            <person name="Iida T."/>
            <person name="Takami H."/>
            <person name="Honda T."/>
            <person name="Sasakawa C."/>
            <person name="Ogasawara N."/>
            <person name="Yasunaga T."/>
            <person name="Kuhara S."/>
            <person name="Shiba T."/>
            <person name="Hattori M."/>
            <person name="Shinagawa H."/>
        </authorList>
    </citation>
    <scope>NUCLEOTIDE SEQUENCE [LARGE SCALE GENOMIC DNA]</scope>
    <source>
        <strain>O157:H7 / Sakai / RIMD 0509952 / EHEC</strain>
    </source>
</reference>
<comment type="catalytic activity">
    <reaction>
        <text>L-citrulline + L-aspartate + ATP = 2-(N(omega)-L-arginino)succinate + AMP + diphosphate + H(+)</text>
        <dbReference type="Rhea" id="RHEA:10932"/>
        <dbReference type="ChEBI" id="CHEBI:15378"/>
        <dbReference type="ChEBI" id="CHEBI:29991"/>
        <dbReference type="ChEBI" id="CHEBI:30616"/>
        <dbReference type="ChEBI" id="CHEBI:33019"/>
        <dbReference type="ChEBI" id="CHEBI:57472"/>
        <dbReference type="ChEBI" id="CHEBI:57743"/>
        <dbReference type="ChEBI" id="CHEBI:456215"/>
        <dbReference type="EC" id="6.3.4.5"/>
    </reaction>
</comment>
<comment type="pathway">
    <text>Amino-acid biosynthesis; L-arginine biosynthesis; L-arginine from L-ornithine and carbamoyl phosphate: step 2/3.</text>
</comment>
<comment type="subunit">
    <text evidence="1">Homotetramer.</text>
</comment>
<comment type="subcellular location">
    <subcellularLocation>
        <location evidence="1">Cytoplasm</location>
    </subcellularLocation>
</comment>
<comment type="similarity">
    <text evidence="2">Belongs to the argininosuccinate synthase family. Type 2 subfamily.</text>
</comment>
<dbReference type="EC" id="6.3.4.5"/>
<dbReference type="EMBL" id="AE005174">
    <property type="protein sequence ID" value="AAG58307.1"/>
    <property type="molecule type" value="Genomic_DNA"/>
</dbReference>
<dbReference type="EMBL" id="BA000007">
    <property type="protein sequence ID" value="BAB37475.1"/>
    <property type="molecule type" value="Genomic_DNA"/>
</dbReference>
<dbReference type="PIR" id="D91135">
    <property type="entry name" value="D91135"/>
</dbReference>
<dbReference type="PIR" id="G85980">
    <property type="entry name" value="G85980"/>
</dbReference>
<dbReference type="RefSeq" id="NP_312079.1">
    <property type="nucleotide sequence ID" value="NC_002695.1"/>
</dbReference>
<dbReference type="RefSeq" id="WP_000207678.1">
    <property type="nucleotide sequence ID" value="NZ_VOAI01000014.1"/>
</dbReference>
<dbReference type="SMR" id="Q8X9M0"/>
<dbReference type="STRING" id="155864.Z4534"/>
<dbReference type="GeneID" id="75173346"/>
<dbReference type="GeneID" id="916108"/>
<dbReference type="KEGG" id="ece:Z4534"/>
<dbReference type="KEGG" id="ecs:ECs_4052"/>
<dbReference type="PATRIC" id="fig|386585.9.peg.4231"/>
<dbReference type="eggNOG" id="COG0137">
    <property type="taxonomic scope" value="Bacteria"/>
</dbReference>
<dbReference type="HOGENOM" id="CLU_032784_4_1_6"/>
<dbReference type="OMA" id="WRWTVSP"/>
<dbReference type="UniPathway" id="UPA00068">
    <property type="reaction ID" value="UER00113"/>
</dbReference>
<dbReference type="Proteomes" id="UP000000558">
    <property type="component" value="Chromosome"/>
</dbReference>
<dbReference type="Proteomes" id="UP000002519">
    <property type="component" value="Chromosome"/>
</dbReference>
<dbReference type="GO" id="GO:0005737">
    <property type="term" value="C:cytoplasm"/>
    <property type="evidence" value="ECO:0007669"/>
    <property type="project" value="UniProtKB-SubCell"/>
</dbReference>
<dbReference type="GO" id="GO:0004055">
    <property type="term" value="F:argininosuccinate synthase activity"/>
    <property type="evidence" value="ECO:0007669"/>
    <property type="project" value="UniProtKB-UniRule"/>
</dbReference>
<dbReference type="GO" id="GO:0005524">
    <property type="term" value="F:ATP binding"/>
    <property type="evidence" value="ECO:0007669"/>
    <property type="project" value="UniProtKB-UniRule"/>
</dbReference>
<dbReference type="GO" id="GO:0042803">
    <property type="term" value="F:protein homodimerization activity"/>
    <property type="evidence" value="ECO:0007669"/>
    <property type="project" value="InterPro"/>
</dbReference>
<dbReference type="GO" id="GO:0000053">
    <property type="term" value="P:argininosuccinate metabolic process"/>
    <property type="evidence" value="ECO:0007669"/>
    <property type="project" value="TreeGrafter"/>
</dbReference>
<dbReference type="GO" id="GO:0006526">
    <property type="term" value="P:L-arginine biosynthetic process"/>
    <property type="evidence" value="ECO:0007669"/>
    <property type="project" value="UniProtKB-UniRule"/>
</dbReference>
<dbReference type="GO" id="GO:0000050">
    <property type="term" value="P:urea cycle"/>
    <property type="evidence" value="ECO:0007669"/>
    <property type="project" value="TreeGrafter"/>
</dbReference>
<dbReference type="CDD" id="cd01999">
    <property type="entry name" value="ASS"/>
    <property type="match status" value="1"/>
</dbReference>
<dbReference type="FunFam" id="1.10.287.400:FF:000001">
    <property type="entry name" value="Argininosuccinate synthase"/>
    <property type="match status" value="1"/>
</dbReference>
<dbReference type="Gene3D" id="1.10.287.400">
    <property type="match status" value="1"/>
</dbReference>
<dbReference type="Gene3D" id="3.90.1260.10">
    <property type="entry name" value="Argininosuccinate synthetase, chain A, domain 2"/>
    <property type="match status" value="1"/>
</dbReference>
<dbReference type="Gene3D" id="3.40.50.620">
    <property type="entry name" value="HUPs"/>
    <property type="match status" value="1"/>
</dbReference>
<dbReference type="HAMAP" id="MF_00581">
    <property type="entry name" value="Arg_succ_synth_type2"/>
    <property type="match status" value="1"/>
</dbReference>
<dbReference type="InterPro" id="IPR023437">
    <property type="entry name" value="Arg_succ_synth_type2_subfam"/>
</dbReference>
<dbReference type="InterPro" id="IPR048268">
    <property type="entry name" value="Arginosuc_syn_C"/>
</dbReference>
<dbReference type="InterPro" id="IPR048267">
    <property type="entry name" value="Arginosuc_syn_N"/>
</dbReference>
<dbReference type="InterPro" id="IPR001518">
    <property type="entry name" value="Arginosuc_synth"/>
</dbReference>
<dbReference type="InterPro" id="IPR018223">
    <property type="entry name" value="Arginosuc_synth_CS"/>
</dbReference>
<dbReference type="InterPro" id="IPR023434">
    <property type="entry name" value="Arginosuc_synth_type_1_subfam"/>
</dbReference>
<dbReference type="InterPro" id="IPR024074">
    <property type="entry name" value="AS_cat/multimer_dom_body"/>
</dbReference>
<dbReference type="InterPro" id="IPR024073">
    <property type="entry name" value="AS_multimer_C_tail"/>
</dbReference>
<dbReference type="InterPro" id="IPR014729">
    <property type="entry name" value="Rossmann-like_a/b/a_fold"/>
</dbReference>
<dbReference type="NCBIfam" id="TIGR00032">
    <property type="entry name" value="argG"/>
    <property type="match status" value="1"/>
</dbReference>
<dbReference type="NCBIfam" id="NF003779">
    <property type="entry name" value="PRK05370.1"/>
    <property type="match status" value="1"/>
</dbReference>
<dbReference type="PANTHER" id="PTHR11587">
    <property type="entry name" value="ARGININOSUCCINATE SYNTHASE"/>
    <property type="match status" value="1"/>
</dbReference>
<dbReference type="PANTHER" id="PTHR11587:SF2">
    <property type="entry name" value="ARGININOSUCCINATE SYNTHASE"/>
    <property type="match status" value="1"/>
</dbReference>
<dbReference type="Pfam" id="PF20979">
    <property type="entry name" value="Arginosuc_syn_C"/>
    <property type="match status" value="1"/>
</dbReference>
<dbReference type="Pfam" id="PF00764">
    <property type="entry name" value="Arginosuc_synth"/>
    <property type="match status" value="1"/>
</dbReference>
<dbReference type="SUPFAM" id="SSF52402">
    <property type="entry name" value="Adenine nucleotide alpha hydrolases-like"/>
    <property type="match status" value="1"/>
</dbReference>
<dbReference type="SUPFAM" id="SSF69864">
    <property type="entry name" value="Argininosuccinate synthetase, C-terminal domain"/>
    <property type="match status" value="1"/>
</dbReference>
<dbReference type="PROSITE" id="PS00564">
    <property type="entry name" value="ARGININOSUCCIN_SYN_1"/>
    <property type="match status" value="1"/>
</dbReference>
<dbReference type="PROSITE" id="PS00565">
    <property type="entry name" value="ARGININOSUCCIN_SYN_2"/>
    <property type="match status" value="1"/>
</dbReference>
<sequence>MTTILKHLPVGQRIGIAFSGGLDTSAALLWMRQKGAVPYAYTANLGQPDEEDYDAIPRRAMEYGAENARLIDCRKQLVAEGIAAIQCGAFHNTTGGLTYFNTTPLGRAVTGTMLVAAMKEDGVNIWGDGSTYKGNDIERFYRYGLLTNAELQIYKPWLDTDFIDELGGRHEMSEFMIACGFDYKMSVEKAYSTDSNMLGATHEAKDLEYLNSSVKIVNPIMGVKFWDESVKIPAEEVTVRFEQGHPVALNGKTFSDDVEMMLEANRIGGRHGLGMSDQIENRIIEAKSRGIYEAPGMALLHIAYERLLTGIHNEDTIEQYHAHGRQLGRLLYQGRWFDSQALMLRDSLQRWVASQITGEVTLELRRGNDYSILNTVSENLTYKPERLTMEKGDSVFSPDDRIGQLTMRNLDITDTREKLFGYAKTGLLSSSAASGVPQMENLENKGQ</sequence>
<proteinExistence type="inferred from homology"/>
<evidence type="ECO:0000250" key="1"/>
<evidence type="ECO:0000305" key="2"/>
<organism>
    <name type="scientific">Escherichia coli O157:H7</name>
    <dbReference type="NCBI Taxonomy" id="83334"/>
    <lineage>
        <taxon>Bacteria</taxon>
        <taxon>Pseudomonadati</taxon>
        <taxon>Pseudomonadota</taxon>
        <taxon>Gammaproteobacteria</taxon>
        <taxon>Enterobacterales</taxon>
        <taxon>Enterobacteriaceae</taxon>
        <taxon>Escherichia</taxon>
    </lineage>
</organism>
<feature type="initiator methionine" description="Removed" evidence="1">
    <location>
        <position position="1"/>
    </location>
</feature>
<feature type="chain" id="PRO_0000148696" description="Argininosuccinate synthase">
    <location>
        <begin position="2"/>
        <end position="447"/>
    </location>
</feature>
<feature type="binding site" evidence="1">
    <location>
        <begin position="17"/>
        <end position="25"/>
    </location>
    <ligand>
        <name>ATP</name>
        <dbReference type="ChEBI" id="CHEBI:30616"/>
    </ligand>
</feature>
<feature type="binding site" evidence="1">
    <location>
        <position position="43"/>
    </location>
    <ligand>
        <name>ATP</name>
        <dbReference type="ChEBI" id="CHEBI:30616"/>
    </ligand>
</feature>
<feature type="binding site" evidence="1">
    <location>
        <position position="99"/>
    </location>
    <ligand>
        <name>L-citrulline</name>
        <dbReference type="ChEBI" id="CHEBI:57743"/>
    </ligand>
</feature>
<feature type="binding site" evidence="1">
    <location>
        <position position="129"/>
    </location>
    <ligand>
        <name>ATP</name>
        <dbReference type="ChEBI" id="CHEBI:30616"/>
    </ligand>
</feature>
<feature type="binding site" evidence="1">
    <location>
        <position position="131"/>
    </location>
    <ligand>
        <name>ATP</name>
        <dbReference type="ChEBI" id="CHEBI:30616"/>
    </ligand>
</feature>
<feature type="binding site" evidence="1">
    <location>
        <position position="131"/>
    </location>
    <ligand>
        <name>L-aspartate</name>
        <dbReference type="ChEBI" id="CHEBI:29991"/>
    </ligand>
</feature>
<feature type="binding site" evidence="1">
    <location>
        <position position="135"/>
    </location>
    <ligand>
        <name>L-aspartate</name>
        <dbReference type="ChEBI" id="CHEBI:29991"/>
    </ligand>
</feature>
<feature type="binding site" evidence="1">
    <location>
        <position position="135"/>
    </location>
    <ligand>
        <name>L-citrulline</name>
        <dbReference type="ChEBI" id="CHEBI:57743"/>
    </ligand>
</feature>
<feature type="binding site" evidence="1">
    <location>
        <position position="136"/>
    </location>
    <ligand>
        <name>ATP</name>
        <dbReference type="ChEBI" id="CHEBI:30616"/>
    </ligand>
</feature>
<feature type="binding site" evidence="1">
    <location>
        <position position="136"/>
    </location>
    <ligand>
        <name>L-aspartate</name>
        <dbReference type="ChEBI" id="CHEBI:29991"/>
    </ligand>
</feature>
<feature type="binding site" evidence="1">
    <location>
        <position position="139"/>
    </location>
    <ligand>
        <name>L-citrulline</name>
        <dbReference type="ChEBI" id="CHEBI:57743"/>
    </ligand>
</feature>
<feature type="binding site" evidence="1">
    <location>
        <position position="192"/>
    </location>
    <ligand>
        <name>L-citrulline</name>
        <dbReference type="ChEBI" id="CHEBI:57743"/>
    </ligand>
</feature>
<feature type="binding site" evidence="1">
    <location>
        <position position="194"/>
    </location>
    <ligand>
        <name>ATP</name>
        <dbReference type="ChEBI" id="CHEBI:30616"/>
    </ligand>
</feature>
<feature type="binding site" evidence="1">
    <location>
        <position position="201"/>
    </location>
    <ligand>
        <name>L-citrulline</name>
        <dbReference type="ChEBI" id="CHEBI:57743"/>
    </ligand>
</feature>
<feature type="binding site" evidence="1">
    <location>
        <position position="203"/>
    </location>
    <ligand>
        <name>L-citrulline</name>
        <dbReference type="ChEBI" id="CHEBI:57743"/>
    </ligand>
</feature>
<feature type="binding site" evidence="1">
    <location>
        <position position="280"/>
    </location>
    <ligand>
        <name>L-citrulline</name>
        <dbReference type="ChEBI" id="CHEBI:57743"/>
    </ligand>
</feature>